<name>HLDE_PSEP7</name>
<proteinExistence type="inferred from homology"/>
<accession>A6VDB5</accession>
<dbReference type="EC" id="2.7.1.167" evidence="1"/>
<dbReference type="EC" id="2.7.7.70" evidence="1"/>
<dbReference type="EMBL" id="CP000744">
    <property type="protein sequence ID" value="ABR85529.1"/>
    <property type="molecule type" value="Genomic_DNA"/>
</dbReference>
<dbReference type="RefSeq" id="WP_003156834.1">
    <property type="nucleotide sequence ID" value="NC_009656.1"/>
</dbReference>
<dbReference type="SMR" id="A6VDB5"/>
<dbReference type="KEGG" id="pap:PSPA7_5731"/>
<dbReference type="HOGENOM" id="CLU_021150_2_1_6"/>
<dbReference type="UniPathway" id="UPA00356">
    <property type="reaction ID" value="UER00437"/>
</dbReference>
<dbReference type="UniPathway" id="UPA00356">
    <property type="reaction ID" value="UER00439"/>
</dbReference>
<dbReference type="Proteomes" id="UP000001582">
    <property type="component" value="Chromosome"/>
</dbReference>
<dbReference type="GO" id="GO:0005829">
    <property type="term" value="C:cytosol"/>
    <property type="evidence" value="ECO:0007669"/>
    <property type="project" value="TreeGrafter"/>
</dbReference>
<dbReference type="GO" id="GO:0005524">
    <property type="term" value="F:ATP binding"/>
    <property type="evidence" value="ECO:0007669"/>
    <property type="project" value="UniProtKB-UniRule"/>
</dbReference>
<dbReference type="GO" id="GO:0033785">
    <property type="term" value="F:heptose 7-phosphate kinase activity"/>
    <property type="evidence" value="ECO:0007669"/>
    <property type="project" value="UniProtKB-UniRule"/>
</dbReference>
<dbReference type="GO" id="GO:0033786">
    <property type="term" value="F:heptose-1-phosphate adenylyltransferase activity"/>
    <property type="evidence" value="ECO:0007669"/>
    <property type="project" value="UniProtKB-UniRule"/>
</dbReference>
<dbReference type="GO" id="GO:0016773">
    <property type="term" value="F:phosphotransferase activity, alcohol group as acceptor"/>
    <property type="evidence" value="ECO:0007669"/>
    <property type="project" value="InterPro"/>
</dbReference>
<dbReference type="GO" id="GO:0097171">
    <property type="term" value="P:ADP-L-glycero-beta-D-manno-heptose biosynthetic process"/>
    <property type="evidence" value="ECO:0007669"/>
    <property type="project" value="UniProtKB-UniPathway"/>
</dbReference>
<dbReference type="CDD" id="cd01172">
    <property type="entry name" value="RfaE_like"/>
    <property type="match status" value="1"/>
</dbReference>
<dbReference type="FunFam" id="3.40.1190.20:FF:000002">
    <property type="entry name" value="Bifunctional protein HldE"/>
    <property type="match status" value="1"/>
</dbReference>
<dbReference type="FunFam" id="3.40.50.620:FF:000028">
    <property type="entry name" value="Bifunctional protein HldE"/>
    <property type="match status" value="1"/>
</dbReference>
<dbReference type="Gene3D" id="3.40.1190.20">
    <property type="match status" value="1"/>
</dbReference>
<dbReference type="Gene3D" id="3.40.50.620">
    <property type="entry name" value="HUPs"/>
    <property type="match status" value="1"/>
</dbReference>
<dbReference type="HAMAP" id="MF_01603">
    <property type="entry name" value="HldE"/>
    <property type="match status" value="1"/>
</dbReference>
<dbReference type="InterPro" id="IPR023030">
    <property type="entry name" value="Bifunc_HldE"/>
</dbReference>
<dbReference type="InterPro" id="IPR002173">
    <property type="entry name" value="Carboh/pur_kinase_PfkB_CS"/>
</dbReference>
<dbReference type="InterPro" id="IPR004821">
    <property type="entry name" value="Cyt_trans-like"/>
</dbReference>
<dbReference type="InterPro" id="IPR011611">
    <property type="entry name" value="PfkB_dom"/>
</dbReference>
<dbReference type="InterPro" id="IPR011913">
    <property type="entry name" value="RfaE_dom_I"/>
</dbReference>
<dbReference type="InterPro" id="IPR011914">
    <property type="entry name" value="RfaE_dom_II"/>
</dbReference>
<dbReference type="InterPro" id="IPR029056">
    <property type="entry name" value="Ribokinase-like"/>
</dbReference>
<dbReference type="InterPro" id="IPR014729">
    <property type="entry name" value="Rossmann-like_a/b/a_fold"/>
</dbReference>
<dbReference type="NCBIfam" id="TIGR00125">
    <property type="entry name" value="cyt_tran_rel"/>
    <property type="match status" value="1"/>
</dbReference>
<dbReference type="NCBIfam" id="NF008454">
    <property type="entry name" value="PRK11316.1"/>
    <property type="match status" value="1"/>
</dbReference>
<dbReference type="NCBIfam" id="TIGR02198">
    <property type="entry name" value="rfaE_dom_I"/>
    <property type="match status" value="1"/>
</dbReference>
<dbReference type="NCBIfam" id="TIGR02199">
    <property type="entry name" value="rfaE_dom_II"/>
    <property type="match status" value="1"/>
</dbReference>
<dbReference type="PANTHER" id="PTHR46969">
    <property type="entry name" value="BIFUNCTIONAL PROTEIN HLDE"/>
    <property type="match status" value="1"/>
</dbReference>
<dbReference type="PANTHER" id="PTHR46969:SF1">
    <property type="entry name" value="BIFUNCTIONAL PROTEIN HLDE"/>
    <property type="match status" value="1"/>
</dbReference>
<dbReference type="Pfam" id="PF01467">
    <property type="entry name" value="CTP_transf_like"/>
    <property type="match status" value="1"/>
</dbReference>
<dbReference type="Pfam" id="PF00294">
    <property type="entry name" value="PfkB"/>
    <property type="match status" value="1"/>
</dbReference>
<dbReference type="SUPFAM" id="SSF52374">
    <property type="entry name" value="Nucleotidylyl transferase"/>
    <property type="match status" value="1"/>
</dbReference>
<dbReference type="SUPFAM" id="SSF53613">
    <property type="entry name" value="Ribokinase-like"/>
    <property type="match status" value="1"/>
</dbReference>
<dbReference type="PROSITE" id="PS00583">
    <property type="entry name" value="PFKB_KINASES_1"/>
    <property type="match status" value="1"/>
</dbReference>
<reference key="1">
    <citation type="submission" date="2007-06" db="EMBL/GenBank/DDBJ databases">
        <authorList>
            <person name="Dodson R.J."/>
            <person name="Harkins D."/>
            <person name="Paulsen I.T."/>
        </authorList>
    </citation>
    <scope>NUCLEOTIDE SEQUENCE [LARGE SCALE GENOMIC DNA]</scope>
    <source>
        <strain>DSM 24068 / PA7</strain>
    </source>
</reference>
<keyword id="KW-0067">ATP-binding</keyword>
<keyword id="KW-0119">Carbohydrate metabolism</keyword>
<keyword id="KW-0418">Kinase</keyword>
<keyword id="KW-0511">Multifunctional enzyme</keyword>
<keyword id="KW-0547">Nucleotide-binding</keyword>
<keyword id="KW-0548">Nucleotidyltransferase</keyword>
<keyword id="KW-0808">Transferase</keyword>
<feature type="chain" id="PRO_1000069399" description="Bifunctional protein HldE">
    <location>
        <begin position="1"/>
        <end position="474"/>
    </location>
</feature>
<feature type="region of interest" description="Ribokinase">
    <location>
        <begin position="1"/>
        <end position="318"/>
    </location>
</feature>
<feature type="region of interest" description="Cytidylyltransferase">
    <location>
        <begin position="343"/>
        <end position="474"/>
    </location>
</feature>
<feature type="active site" evidence="1">
    <location>
        <position position="263"/>
    </location>
</feature>
<feature type="binding site" evidence="1">
    <location>
        <begin position="194"/>
        <end position="197"/>
    </location>
    <ligand>
        <name>ATP</name>
        <dbReference type="ChEBI" id="CHEBI:30616"/>
    </ligand>
</feature>
<protein>
    <recommendedName>
        <fullName evidence="1">Bifunctional protein HldE</fullName>
    </recommendedName>
    <domain>
        <recommendedName>
            <fullName evidence="1">D-beta-D-heptose 7-phosphate kinase</fullName>
            <ecNumber evidence="1">2.7.1.167</ecNumber>
        </recommendedName>
        <alternativeName>
            <fullName evidence="1">D-beta-D-heptose 7-phosphotransferase</fullName>
        </alternativeName>
        <alternativeName>
            <fullName evidence="1">D-glycero-beta-D-manno-heptose-7-phosphate kinase</fullName>
        </alternativeName>
    </domain>
    <domain>
        <recommendedName>
            <fullName evidence="1">D-beta-D-heptose 1-phosphate adenylyltransferase</fullName>
            <ecNumber evidence="1">2.7.7.70</ecNumber>
        </recommendedName>
        <alternativeName>
            <fullName evidence="1">D-glycero-beta-D-manno-heptose 1-phosphate adenylyltransferase</fullName>
        </alternativeName>
    </domain>
</protein>
<gene>
    <name evidence="1" type="primary">hldE</name>
    <name type="ordered locus">PSPA7_5731</name>
</gene>
<evidence type="ECO:0000255" key="1">
    <source>
        <dbReference type="HAMAP-Rule" id="MF_01603"/>
    </source>
</evidence>
<sequence>MKLSMPRFDQAPVLVVGDVMLDRYWHGATSRISPEAPVPVVRVEQHEDRPGGAANVALNIAALGAQALLVGVTGRDEAADSLANSLKAAGVDARFQRIDSQPTIVKLRVMSRHQQLLRVDFEEPFRTDAAALALDVEALLDQVKVLVLSDYGKGALQNHQVLIQAARARNIPVLADPKGKDFAIYRGASLITPNLSEFETIVGRCADEAELVAKGQALMSELELGALLVTRGEHGMTLLRHGQPALHLPARAREVFDVTGAGDTVISTLAAALAAGEELPSAVGLANLAAGIVVGKLGTAAISAPELRRAVQREQGSERGVLGLEQLLLAIEDARAHGEKIVFTNGCFDILHAGHVTYLEQARAQGDRLIVGVNDDASVTRLKGAGRPINSVDRRMAVLAGLGAVDWVVSFAEDTPERLLEQVRPDVLVKGGDYGVEQVVGAQIVKAYGGEVRVLGLVENSSTTAIVEKIRQKG</sequence>
<comment type="function">
    <text evidence="1">Catalyzes the phosphorylation of D-glycero-D-manno-heptose 7-phosphate at the C-1 position to selectively form D-glycero-beta-D-manno-heptose-1,7-bisphosphate.</text>
</comment>
<comment type="function">
    <text evidence="1">Catalyzes the ADP transfer from ATP to D-glycero-beta-D-manno-heptose 1-phosphate, yielding ADP-D-glycero-beta-D-manno-heptose.</text>
</comment>
<comment type="catalytic activity">
    <reaction evidence="1">
        <text>D-glycero-beta-D-manno-heptose 7-phosphate + ATP = D-glycero-beta-D-manno-heptose 1,7-bisphosphate + ADP + H(+)</text>
        <dbReference type="Rhea" id="RHEA:27473"/>
        <dbReference type="ChEBI" id="CHEBI:15378"/>
        <dbReference type="ChEBI" id="CHEBI:30616"/>
        <dbReference type="ChEBI" id="CHEBI:60204"/>
        <dbReference type="ChEBI" id="CHEBI:60208"/>
        <dbReference type="ChEBI" id="CHEBI:456216"/>
        <dbReference type="EC" id="2.7.1.167"/>
    </reaction>
</comment>
<comment type="catalytic activity">
    <reaction evidence="1">
        <text>D-glycero-beta-D-manno-heptose 1-phosphate + ATP + H(+) = ADP-D-glycero-beta-D-manno-heptose + diphosphate</text>
        <dbReference type="Rhea" id="RHEA:27465"/>
        <dbReference type="ChEBI" id="CHEBI:15378"/>
        <dbReference type="ChEBI" id="CHEBI:30616"/>
        <dbReference type="ChEBI" id="CHEBI:33019"/>
        <dbReference type="ChEBI" id="CHEBI:59967"/>
        <dbReference type="ChEBI" id="CHEBI:61593"/>
        <dbReference type="EC" id="2.7.7.70"/>
    </reaction>
</comment>
<comment type="pathway">
    <text evidence="1">Nucleotide-sugar biosynthesis; ADP-L-glycero-beta-D-manno-heptose biosynthesis; ADP-L-glycero-beta-D-manno-heptose from D-glycero-beta-D-manno-heptose 7-phosphate: step 1/4.</text>
</comment>
<comment type="pathway">
    <text evidence="1">Nucleotide-sugar biosynthesis; ADP-L-glycero-beta-D-manno-heptose biosynthesis; ADP-L-glycero-beta-D-manno-heptose from D-glycero-beta-D-manno-heptose 7-phosphate: step 3/4.</text>
</comment>
<comment type="subunit">
    <text evidence="1">Homodimer.</text>
</comment>
<comment type="similarity">
    <text evidence="1">In the N-terminal section; belongs to the carbohydrate kinase PfkB family.</text>
</comment>
<comment type="similarity">
    <text evidence="1">In the C-terminal section; belongs to the cytidylyltransferase family.</text>
</comment>
<organism>
    <name type="scientific">Pseudomonas paraeruginosa (strain DSM 24068 / PA7)</name>
    <name type="common">Pseudomonas aeruginosa (strain PA7)</name>
    <dbReference type="NCBI Taxonomy" id="381754"/>
    <lineage>
        <taxon>Bacteria</taxon>
        <taxon>Pseudomonadati</taxon>
        <taxon>Pseudomonadota</taxon>
        <taxon>Gammaproteobacteria</taxon>
        <taxon>Pseudomonadales</taxon>
        <taxon>Pseudomonadaceae</taxon>
        <taxon>Pseudomonas</taxon>
        <taxon>Pseudomonas paraeruginosa</taxon>
    </lineage>
</organism>